<feature type="chain" id="PRO_0000363066" description="Fructose-2,6-bisphosphatase TIGAR">
    <location>
        <begin position="1"/>
        <end position="270"/>
    </location>
</feature>
<feature type="active site" description="Tele-phosphohistidine intermediate" evidence="1">
    <location>
        <position position="11"/>
    </location>
</feature>
<feature type="active site" description="Proton donor/acceptor" evidence="1">
    <location>
        <position position="89"/>
    </location>
</feature>
<feature type="site" description="Transition state stabilizer" evidence="1">
    <location>
        <position position="198"/>
    </location>
</feature>
<feature type="modified residue" description="N6-acetyllysine" evidence="3">
    <location>
        <position position="50"/>
    </location>
</feature>
<keyword id="KW-0007">Acetylation</keyword>
<keyword id="KW-0053">Apoptosis</keyword>
<keyword id="KW-0072">Autophagy</keyword>
<keyword id="KW-0963">Cytoplasm</keyword>
<keyword id="KW-0378">Hydrolase</keyword>
<keyword id="KW-0496">Mitochondrion</keyword>
<keyword id="KW-0539">Nucleus</keyword>
<keyword id="KW-1185">Reference proteome</keyword>
<organism>
    <name type="scientific">Bos taurus</name>
    <name type="common">Bovine</name>
    <dbReference type="NCBI Taxonomy" id="9913"/>
    <lineage>
        <taxon>Eukaryota</taxon>
        <taxon>Metazoa</taxon>
        <taxon>Chordata</taxon>
        <taxon>Craniata</taxon>
        <taxon>Vertebrata</taxon>
        <taxon>Euteleostomi</taxon>
        <taxon>Mammalia</taxon>
        <taxon>Eutheria</taxon>
        <taxon>Laurasiatheria</taxon>
        <taxon>Artiodactyla</taxon>
        <taxon>Ruminantia</taxon>
        <taxon>Pecora</taxon>
        <taxon>Bovidae</taxon>
        <taxon>Bovinae</taxon>
        <taxon>Bos</taxon>
    </lineage>
</organism>
<name>TIGAR_BOVIN</name>
<sequence>MTRFALTVVRHGETRLNKEKIIQGQGIDEPLSETGFKQAAAAGIFLKDVKFTHVFSSDLTRTKQTVHGILEKSKFCKDMTVKYDSRLRERKYGVAEGRPLSELRAMAKAAGEECPAFTPPGGETLDQLKRRGKDFFEFLCQLILKEAGQNEQFSQEAPSSCLESSLAEIFPLGKNCASTFNSDSGTPGLAASVLVVSHGAYIRSLLDYFLTDLKCSFPATLSRSELTSVSPNTGMTVFILNFEKGGKGRPTAQCVCVNLQGHLAGVNKTP</sequence>
<gene>
    <name evidence="3" type="primary">TIGAR</name>
</gene>
<reference key="1">
    <citation type="submission" date="2006-05" db="EMBL/GenBank/DDBJ databases">
        <authorList>
            <consortium name="NIH - Mammalian Gene Collection (MGC) project"/>
        </authorList>
    </citation>
    <scope>NUCLEOTIDE SEQUENCE [LARGE SCALE MRNA]</scope>
    <source>
        <strain>Hereford</strain>
        <tissue>Ascending colon</tissue>
    </source>
</reference>
<accession>Q1JQA7</accession>
<dbReference type="EC" id="3.1.3.46" evidence="3"/>
<dbReference type="EMBL" id="BC116101">
    <property type="protein sequence ID" value="AAI16102.1"/>
    <property type="molecule type" value="mRNA"/>
</dbReference>
<dbReference type="RefSeq" id="NP_001069838.1">
    <property type="nucleotide sequence ID" value="NM_001076370.1"/>
</dbReference>
<dbReference type="SMR" id="Q1JQA7"/>
<dbReference type="FunCoup" id="Q1JQA7">
    <property type="interactions" value="307"/>
</dbReference>
<dbReference type="STRING" id="9913.ENSBTAP00000022146"/>
<dbReference type="PaxDb" id="9913-ENSBTAP00000022146"/>
<dbReference type="Ensembl" id="ENSBTAT00000022146.4">
    <property type="protein sequence ID" value="ENSBTAP00000022146.3"/>
    <property type="gene ID" value="ENSBTAG00000016650.5"/>
</dbReference>
<dbReference type="GeneID" id="615392"/>
<dbReference type="KEGG" id="bta:615392"/>
<dbReference type="CTD" id="57103"/>
<dbReference type="VEuPathDB" id="HostDB:ENSBTAG00000016650"/>
<dbReference type="VGNC" id="VGNC:35863">
    <property type="gene designation" value="TIGAR"/>
</dbReference>
<dbReference type="eggNOG" id="KOG0235">
    <property type="taxonomic scope" value="Eukaryota"/>
</dbReference>
<dbReference type="GeneTree" id="ENSGT00390000013224"/>
<dbReference type="HOGENOM" id="CLU_033323_16_0_1"/>
<dbReference type="InParanoid" id="Q1JQA7"/>
<dbReference type="OMA" id="PTIQCVC"/>
<dbReference type="OrthoDB" id="354304at2759"/>
<dbReference type="TreeFam" id="TF329053"/>
<dbReference type="Reactome" id="R-BTA-5628897">
    <property type="pathway name" value="TP53 Regulates Metabolic Genes"/>
</dbReference>
<dbReference type="Proteomes" id="UP000009136">
    <property type="component" value="Chromosome 5"/>
</dbReference>
<dbReference type="Bgee" id="ENSBTAG00000016650">
    <property type="expression patterns" value="Expressed in oocyte and 105 other cell types or tissues"/>
</dbReference>
<dbReference type="GO" id="GO:0005737">
    <property type="term" value="C:cytoplasm"/>
    <property type="evidence" value="ECO:0000250"/>
    <property type="project" value="UniProtKB"/>
</dbReference>
<dbReference type="GO" id="GO:0005829">
    <property type="term" value="C:cytosol"/>
    <property type="evidence" value="ECO:0000318"/>
    <property type="project" value="GO_Central"/>
</dbReference>
<dbReference type="GO" id="GO:0005741">
    <property type="term" value="C:mitochondrial outer membrane"/>
    <property type="evidence" value="ECO:0000250"/>
    <property type="project" value="UniProtKB"/>
</dbReference>
<dbReference type="GO" id="GO:0005739">
    <property type="term" value="C:mitochondrion"/>
    <property type="evidence" value="ECO:0000250"/>
    <property type="project" value="UniProtKB"/>
</dbReference>
<dbReference type="GO" id="GO:0005634">
    <property type="term" value="C:nucleus"/>
    <property type="evidence" value="ECO:0000250"/>
    <property type="project" value="UniProtKB"/>
</dbReference>
<dbReference type="GO" id="GO:0004331">
    <property type="term" value="F:fructose-2,6-bisphosphate 2-phosphatase activity"/>
    <property type="evidence" value="ECO:0000250"/>
    <property type="project" value="UniProtKB"/>
</dbReference>
<dbReference type="GO" id="GO:0006915">
    <property type="term" value="P:apoptotic process"/>
    <property type="evidence" value="ECO:0007669"/>
    <property type="project" value="UniProtKB-KW"/>
</dbReference>
<dbReference type="GO" id="GO:0006914">
    <property type="term" value="P:autophagy"/>
    <property type="evidence" value="ECO:0007669"/>
    <property type="project" value="UniProtKB-KW"/>
</dbReference>
<dbReference type="GO" id="GO:0071456">
    <property type="term" value="P:cellular response to hypoxia"/>
    <property type="evidence" value="ECO:0000250"/>
    <property type="project" value="UniProtKB"/>
</dbReference>
<dbReference type="GO" id="GO:0006974">
    <property type="term" value="P:DNA damage response"/>
    <property type="evidence" value="ECO:0000250"/>
    <property type="project" value="UniProtKB"/>
</dbReference>
<dbReference type="GO" id="GO:0045820">
    <property type="term" value="P:negative regulation of glycolytic process"/>
    <property type="evidence" value="ECO:0000318"/>
    <property type="project" value="GO_Central"/>
</dbReference>
<dbReference type="GO" id="GO:0043069">
    <property type="term" value="P:negative regulation of programmed cell death"/>
    <property type="evidence" value="ECO:0000250"/>
    <property type="project" value="UniProtKB"/>
</dbReference>
<dbReference type="GO" id="GO:0045739">
    <property type="term" value="P:positive regulation of DNA repair"/>
    <property type="evidence" value="ECO:0000250"/>
    <property type="project" value="UniProtKB"/>
</dbReference>
<dbReference type="GO" id="GO:1903301">
    <property type="term" value="P:positive regulation of hexokinase activity"/>
    <property type="evidence" value="ECO:0000250"/>
    <property type="project" value="UniProtKB"/>
</dbReference>
<dbReference type="GO" id="GO:1905857">
    <property type="term" value="P:positive regulation of pentose-phosphate shunt"/>
    <property type="evidence" value="ECO:0000250"/>
    <property type="project" value="UniProtKB"/>
</dbReference>
<dbReference type="GO" id="GO:0043456">
    <property type="term" value="P:regulation of pentose-phosphate shunt"/>
    <property type="evidence" value="ECO:0000250"/>
    <property type="project" value="UniProtKB"/>
</dbReference>
<dbReference type="GO" id="GO:1902153">
    <property type="term" value="P:regulation of response to DNA damage checkpoint signaling"/>
    <property type="evidence" value="ECO:0000250"/>
    <property type="project" value="UniProtKB"/>
</dbReference>
<dbReference type="GO" id="GO:0002931">
    <property type="term" value="P:response to ischemia"/>
    <property type="evidence" value="ECO:0000250"/>
    <property type="project" value="UniProtKB"/>
</dbReference>
<dbReference type="CDD" id="cd07067">
    <property type="entry name" value="HP_PGM_like"/>
    <property type="match status" value="1"/>
</dbReference>
<dbReference type="FunFam" id="3.40.50.1240:FF:000026">
    <property type="entry name" value="Putative fructose-2,6-bisphosphatase TIGAR"/>
    <property type="match status" value="1"/>
</dbReference>
<dbReference type="Gene3D" id="3.40.50.1240">
    <property type="entry name" value="Phosphoglycerate mutase-like"/>
    <property type="match status" value="1"/>
</dbReference>
<dbReference type="InterPro" id="IPR013078">
    <property type="entry name" value="His_Pase_superF_clade-1"/>
</dbReference>
<dbReference type="InterPro" id="IPR029033">
    <property type="entry name" value="His_PPase_superfam"/>
</dbReference>
<dbReference type="InterPro" id="IPR001345">
    <property type="entry name" value="PG/BPGM_mutase_AS"/>
</dbReference>
<dbReference type="InterPro" id="IPR051695">
    <property type="entry name" value="Phosphoglycerate_Mutase"/>
</dbReference>
<dbReference type="PANTHER" id="PTHR46517">
    <property type="entry name" value="FRUCTOSE-2,6-BISPHOSPHATASE TIGAR"/>
    <property type="match status" value="1"/>
</dbReference>
<dbReference type="PANTHER" id="PTHR46517:SF1">
    <property type="entry name" value="FRUCTOSE-2,6-BISPHOSPHATASE TIGAR"/>
    <property type="match status" value="1"/>
</dbReference>
<dbReference type="Pfam" id="PF00300">
    <property type="entry name" value="His_Phos_1"/>
    <property type="match status" value="1"/>
</dbReference>
<dbReference type="SMART" id="SM00855">
    <property type="entry name" value="PGAM"/>
    <property type="match status" value="1"/>
</dbReference>
<dbReference type="SUPFAM" id="SSF53254">
    <property type="entry name" value="Phosphoglycerate mutase-like"/>
    <property type="match status" value="1"/>
</dbReference>
<dbReference type="PROSITE" id="PS00175">
    <property type="entry name" value="PG_MUTASE"/>
    <property type="match status" value="1"/>
</dbReference>
<proteinExistence type="evidence at transcript level"/>
<protein>
    <recommendedName>
        <fullName evidence="4">Fructose-2,6-bisphosphatase TIGAR</fullName>
        <ecNumber evidence="3">3.1.3.46</ecNumber>
    </recommendedName>
    <alternativeName>
        <fullName evidence="3">TP53-induced glycolysis and apoptosis regulator</fullName>
    </alternativeName>
    <alternativeName>
        <fullName evidence="3">TP53-induced glycolysis regulatory phosphatase</fullName>
    </alternativeName>
</protein>
<comment type="function">
    <text evidence="2 3">Fructose-bisphosphatase hydrolyzing fructose-2,6-bisphosphate as well as fructose-1,6-bisphosphate (By similarity). Acts as a negative regulator of glycolysis by lowering intracellular levels of fructose-2,6-bisphosphate in a p53/TP53-dependent manner, resulting in the pentose phosphate pathway (PPP) activation and NADPH production. Contributes to the generation of reduced glutathione to cause a decrease in intracellular reactive oxygen species (ROS) content, correlating with its ability to protect cells from oxidative or metabolic stress-induced cell death. Plays a role in promoting protection against cell death during hypoxia by decreasing mitochondria ROS levels in a HK2-dependent manner through a mechanism that is independent of its fructose-bisphosphatase activity. In response to cardiac damage stress, mediates p53-induced inhibition of myocyte mitophagy through ROS levels reduction and the subsequent inactivation of BNIP3. Reduced mitophagy results in an enhanced apoptotic myocyte cell death, and exacerbates cardiac damage. Plays a role in adult intestinal regeneration; contributes to the growth, proliferation and survival of intestinal crypts following tissue ablation. Plays a neuroprotective role against ischemic brain damage by enhancing PPP flux and preserving mitochondria functions. Protects glioma cells from hypoxia- and ROS-induced cell death by inhibiting glycolysis and activating mitochondrial energy metabolism and oxygen consumption in a TKTL1-dependent and p53/TP53-independent manner. Plays a role in cancer cell survival by promoting DNA repair through activating PPP flux in a CDK5-ATM-dependent signaling pathway during hypoxia and/or genome stress-induced DNA damage responses. Involved in intestinal tumor progression.</text>
</comment>
<comment type="catalytic activity">
    <reaction evidence="3">
        <text>beta-D-fructose 2,6-bisphosphate + H2O = beta-D-fructose 6-phosphate + phosphate</text>
        <dbReference type="Rhea" id="RHEA:17289"/>
        <dbReference type="ChEBI" id="CHEBI:15377"/>
        <dbReference type="ChEBI" id="CHEBI:43474"/>
        <dbReference type="ChEBI" id="CHEBI:57634"/>
        <dbReference type="ChEBI" id="CHEBI:58579"/>
        <dbReference type="EC" id="3.1.3.46"/>
    </reaction>
</comment>
<comment type="subunit">
    <text evidence="3">Interacts with HK2; the interaction increases hexokinase HK2 activity in a hypoxia- and HIF1A-dependent manner, resulting in the regulation of mitochondrial membrane potential, thus increasing NADPH production and decreasing intracellular ROS levels.</text>
</comment>
<comment type="subcellular location">
    <subcellularLocation>
        <location evidence="2">Cytoplasm</location>
    </subcellularLocation>
    <subcellularLocation>
        <location evidence="3">Nucleus</location>
    </subcellularLocation>
    <subcellularLocation>
        <location evidence="2">Mitochondrion</location>
    </subcellularLocation>
    <text evidence="2 3">Translocated to the mitochondria during hypoxia in a HIF1A-dependent manner. Colocalizes with HK2 in the mitochondria during hypoxia. Translocated to the nucleus during hypoxia and/or genome stress-induced DNA damage responses in cancer cells. Translocation to the mitochondria is enhanced in ischemic cortex after reperfusion and/or during oxygen and glucose deprivation (OGD)/reoxygenation insult in primary neurons.</text>
</comment>
<comment type="similarity">
    <text evidence="4">Belongs to the phosphoglycerate mutase family.</text>
</comment>
<comment type="caution">
    <text evidence="4">Not expected to have any kinase activity.</text>
</comment>
<evidence type="ECO:0000250" key="1">
    <source>
        <dbReference type="UniProtKB" id="Q7ZVE3"/>
    </source>
</evidence>
<evidence type="ECO:0000250" key="2">
    <source>
        <dbReference type="UniProtKB" id="Q8BZA9"/>
    </source>
</evidence>
<evidence type="ECO:0000250" key="3">
    <source>
        <dbReference type="UniProtKB" id="Q9NQ88"/>
    </source>
</evidence>
<evidence type="ECO:0000305" key="4"/>